<gene>
    <name evidence="1" type="primary">Tas2r120</name>
    <name type="synonym">T2r17</name>
</gene>
<keyword id="KW-0297">G-protein coupled receptor</keyword>
<keyword id="KW-0325">Glycoprotein</keyword>
<keyword id="KW-0472">Membrane</keyword>
<keyword id="KW-0675">Receptor</keyword>
<keyword id="KW-1185">Reference proteome</keyword>
<keyword id="KW-0716">Sensory transduction</keyword>
<keyword id="KW-0919">Taste</keyword>
<keyword id="KW-0807">Transducer</keyword>
<keyword id="KW-0812">Transmembrane</keyword>
<keyword id="KW-1133">Transmembrane helix</keyword>
<proteinExistence type="inferred from homology"/>
<evidence type="ECO:0000250" key="1">
    <source>
        <dbReference type="UniProtKB" id="Q7M721"/>
    </source>
</evidence>
<evidence type="ECO:0000255" key="2"/>
<evidence type="ECO:0000305" key="3"/>
<evidence type="ECO:0000312" key="4">
    <source>
        <dbReference type="EMBL" id="AAR13346.1"/>
    </source>
</evidence>
<comment type="function">
    <text evidence="3">Putative taste receptor which may play a role in the perception of bitterness.</text>
</comment>
<comment type="subcellular location">
    <subcellularLocation>
        <location evidence="3">Membrane</location>
        <topology evidence="3">Multi-pass membrane protein</topology>
    </subcellularLocation>
</comment>
<comment type="miscellaneous">
    <text evidence="3">Several bitter taste receptors are expressed in a single taste receptor cell.</text>
</comment>
<comment type="similarity">
    <text evidence="2">Belongs to the G-protein coupled receptor T2R family.</text>
</comment>
<protein>
    <recommendedName>
        <fullName>Taste receptor type 2 member 120</fullName>
        <shortName>T2R120</shortName>
    </recommendedName>
    <alternativeName>
        <fullName>Taste receptor type 2 member 17</fullName>
        <shortName>T2R17</shortName>
    </alternativeName>
</protein>
<name>TR120_RAT</name>
<sequence length="295" mass="33578">MDLTEWIVTIIMMIEFLLGNCANFFIMVVNAIDCMKRRKISSADRIITALAISRIGLLWAMLMNWHSRVYTTDTYSFQVTAFSGIIWAITNHFTTWLGTILSMFYLFKIANFSNCLFLHLKRKLDSVLLVIFLVSSLLVFAYLGVVNIKKIAWLSVHEGNVTVKSKLMNIASIRDTLLFSLINIAPFGISLTCVLLLIYSLGKHLKNMKFYGKGCQDQSTMVHIRALQTVVSFLLLYATYSSCVIISGWSIQNVPIFLFCVTIGAFYPAGHSCILIWGNQKLKQFLLLFLRQMKC</sequence>
<reference evidence="4" key="1">
    <citation type="submission" date="2003-08" db="EMBL/GenBank/DDBJ databases">
        <title>Identification of new putative rat taste receptors belonging to the T2R family.</title>
        <authorList>
            <person name="Conte C."/>
            <person name="Ebeling M."/>
            <person name="Marcuz A."/>
            <person name="Andres-Barquin P.J."/>
        </authorList>
    </citation>
    <scope>NUCLEOTIDE SEQUENCE [GENOMIC DNA]</scope>
    <source>
        <strain evidence="4">Sprague-Dawley</strain>
    </source>
</reference>
<organism>
    <name type="scientific">Rattus norvegicus</name>
    <name type="common">Rat</name>
    <dbReference type="NCBI Taxonomy" id="10116"/>
    <lineage>
        <taxon>Eukaryota</taxon>
        <taxon>Metazoa</taxon>
        <taxon>Chordata</taxon>
        <taxon>Craniata</taxon>
        <taxon>Vertebrata</taxon>
        <taxon>Euteleostomi</taxon>
        <taxon>Mammalia</taxon>
        <taxon>Eutheria</taxon>
        <taxon>Euarchontoglires</taxon>
        <taxon>Glires</taxon>
        <taxon>Rodentia</taxon>
        <taxon>Myomorpha</taxon>
        <taxon>Muroidea</taxon>
        <taxon>Muridae</taxon>
        <taxon>Murinae</taxon>
        <taxon>Rattus</taxon>
    </lineage>
</organism>
<feature type="chain" id="PRO_0000248480" description="Taste receptor type 2 member 120">
    <location>
        <begin position="1"/>
        <end position="295"/>
    </location>
</feature>
<feature type="topological domain" description="Extracellular" evidence="2">
    <location>
        <begin position="1"/>
        <end position="5"/>
    </location>
</feature>
<feature type="transmembrane region" description="Helical; Name=1" evidence="2">
    <location>
        <begin position="6"/>
        <end position="26"/>
    </location>
</feature>
<feature type="topological domain" description="Cytoplasmic" evidence="2">
    <location>
        <begin position="27"/>
        <end position="45"/>
    </location>
</feature>
<feature type="transmembrane region" description="Helical; Name=2" evidence="2">
    <location>
        <begin position="46"/>
        <end position="66"/>
    </location>
</feature>
<feature type="topological domain" description="Extracellular" evidence="2">
    <location>
        <begin position="67"/>
        <end position="83"/>
    </location>
</feature>
<feature type="transmembrane region" description="Helical; Name=3" evidence="2">
    <location>
        <begin position="84"/>
        <end position="104"/>
    </location>
</feature>
<feature type="topological domain" description="Cytoplasmic" evidence="2">
    <location>
        <begin position="105"/>
        <end position="125"/>
    </location>
</feature>
<feature type="transmembrane region" description="Helical; Name=4" evidence="2">
    <location>
        <begin position="126"/>
        <end position="146"/>
    </location>
</feature>
<feature type="topological domain" description="Extracellular" evidence="2">
    <location>
        <begin position="147"/>
        <end position="177"/>
    </location>
</feature>
<feature type="transmembrane region" description="Helical; Name=5" evidence="2">
    <location>
        <begin position="178"/>
        <end position="198"/>
    </location>
</feature>
<feature type="topological domain" description="Cytoplasmic" evidence="2">
    <location>
        <begin position="199"/>
        <end position="230"/>
    </location>
</feature>
<feature type="transmembrane region" description="Helical; Name=6" evidence="2">
    <location>
        <begin position="231"/>
        <end position="251"/>
    </location>
</feature>
<feature type="topological domain" description="Extracellular" evidence="2">
    <location>
        <begin position="252"/>
        <end position="255"/>
    </location>
</feature>
<feature type="transmembrane region" description="Helical; Name=7" evidence="2">
    <location>
        <begin position="256"/>
        <end position="276"/>
    </location>
</feature>
<feature type="topological domain" description="Cytoplasmic" evidence="2">
    <location>
        <begin position="277"/>
        <end position="295"/>
    </location>
</feature>
<feature type="glycosylation site" description="N-linked (GlcNAc...) asparagine" evidence="2">
    <location>
        <position position="160"/>
    </location>
</feature>
<dbReference type="EMBL" id="AY362737">
    <property type="protein sequence ID" value="AAR13346.1"/>
    <property type="molecule type" value="Genomic_DNA"/>
</dbReference>
<dbReference type="RefSeq" id="NP_001074406.1">
    <property type="nucleotide sequence ID" value="NM_001080937.1"/>
</dbReference>
<dbReference type="SMR" id="Q67ET3"/>
<dbReference type="FunCoup" id="Q67ET3">
    <property type="interactions" value="117"/>
</dbReference>
<dbReference type="STRING" id="10116.ENSRNOP00000032084"/>
<dbReference type="GlyCosmos" id="Q67ET3">
    <property type="glycosylation" value="1 site, No reported glycans"/>
</dbReference>
<dbReference type="GlyGen" id="Q67ET3">
    <property type="glycosylation" value="1 site"/>
</dbReference>
<dbReference type="PhosphoSitePlus" id="Q67ET3"/>
<dbReference type="PaxDb" id="10116-ENSRNOP00000032084"/>
<dbReference type="Ensembl" id="ENSRNOT00000031438.2">
    <property type="protein sequence ID" value="ENSRNOP00000032084.1"/>
    <property type="gene ID" value="ENSRNOG00000021445.2"/>
</dbReference>
<dbReference type="GeneID" id="690448"/>
<dbReference type="KEGG" id="rno:690448"/>
<dbReference type="UCSC" id="RGD:1596060">
    <property type="organism name" value="rat"/>
</dbReference>
<dbReference type="AGR" id="RGD:1596060"/>
<dbReference type="CTD" id="387348"/>
<dbReference type="RGD" id="1596060">
    <property type="gene designation" value="Tas2r120"/>
</dbReference>
<dbReference type="eggNOG" id="ENOG502TE6U">
    <property type="taxonomic scope" value="Eukaryota"/>
</dbReference>
<dbReference type="GeneTree" id="ENSGT01100000263477"/>
<dbReference type="HOGENOM" id="CLU_072337_2_0_1"/>
<dbReference type="InParanoid" id="Q67ET3"/>
<dbReference type="OMA" id="HFSSWLA"/>
<dbReference type="OrthoDB" id="8876749at2759"/>
<dbReference type="PhylomeDB" id="Q67ET3"/>
<dbReference type="TreeFam" id="TF335891"/>
<dbReference type="Reactome" id="R-RNO-418594">
    <property type="pathway name" value="G alpha (i) signalling events"/>
</dbReference>
<dbReference type="Reactome" id="R-RNO-420499">
    <property type="pathway name" value="Class C/3 (Metabotropic glutamate/pheromone receptors)"/>
</dbReference>
<dbReference type="Reactome" id="R-RNO-9717207">
    <property type="pathway name" value="Sensory perception of sweet, bitter, and umami (glutamate) taste"/>
</dbReference>
<dbReference type="PRO" id="PR:Q67ET3"/>
<dbReference type="Proteomes" id="UP000002494">
    <property type="component" value="Chromosome 4"/>
</dbReference>
<dbReference type="Bgee" id="ENSRNOG00000021445">
    <property type="expression patterns" value="Expressed in heart"/>
</dbReference>
<dbReference type="GO" id="GO:0016020">
    <property type="term" value="C:membrane"/>
    <property type="evidence" value="ECO:0000318"/>
    <property type="project" value="GO_Central"/>
</dbReference>
<dbReference type="GO" id="GO:0033038">
    <property type="term" value="F:bitter taste receptor activity"/>
    <property type="evidence" value="ECO:0000318"/>
    <property type="project" value="GO_Central"/>
</dbReference>
<dbReference type="GO" id="GO:0004930">
    <property type="term" value="F:G protein-coupled receptor activity"/>
    <property type="evidence" value="ECO:0007669"/>
    <property type="project" value="UniProtKB-KW"/>
</dbReference>
<dbReference type="GO" id="GO:0001580">
    <property type="term" value="P:detection of chemical stimulus involved in sensory perception of bitter taste"/>
    <property type="evidence" value="ECO:0000318"/>
    <property type="project" value="GO_Central"/>
</dbReference>
<dbReference type="CDD" id="cd15027">
    <property type="entry name" value="7tm_TAS2R43-like"/>
    <property type="match status" value="1"/>
</dbReference>
<dbReference type="FunFam" id="1.20.1070.10:FF:000042">
    <property type="entry name" value="Taste receptor type 2 member 7"/>
    <property type="match status" value="1"/>
</dbReference>
<dbReference type="Gene3D" id="1.20.1070.10">
    <property type="entry name" value="Rhodopsin 7-helix transmembrane proteins"/>
    <property type="match status" value="1"/>
</dbReference>
<dbReference type="InterPro" id="IPR007960">
    <property type="entry name" value="TAS2R"/>
</dbReference>
<dbReference type="PANTHER" id="PTHR11394">
    <property type="entry name" value="TASTE RECEPTOR TYPE 2"/>
    <property type="match status" value="1"/>
</dbReference>
<dbReference type="PANTHER" id="PTHR11394:SF27">
    <property type="entry name" value="TASTE RECEPTOR TYPE 2 MEMBER 20"/>
    <property type="match status" value="1"/>
</dbReference>
<dbReference type="Pfam" id="PF05296">
    <property type="entry name" value="TAS2R"/>
    <property type="match status" value="1"/>
</dbReference>
<dbReference type="SUPFAM" id="SSF81321">
    <property type="entry name" value="Family A G protein-coupled receptor-like"/>
    <property type="match status" value="1"/>
</dbReference>
<accession>Q67ET3</accession>